<protein>
    <recommendedName>
        <fullName evidence="18">Sodium/nucleoside cotransporter 1</fullName>
    </recommendedName>
    <alternativeName>
        <fullName evidence="16">Concentrative nucleoside transporter 1</fullName>
        <shortName evidence="16">CNT 1</shortName>
        <shortName evidence="16">hCNT1</shortName>
    </alternativeName>
    <alternativeName>
        <fullName>Na(+)/nucleoside cotransporter 1</fullName>
    </alternativeName>
    <alternativeName>
        <fullName>Sodium-coupled nucleoside transporter 1</fullName>
    </alternativeName>
    <alternativeName>
        <fullName evidence="19">Solute carrier family 28 member 1</fullName>
    </alternativeName>
</protein>
<dbReference type="EMBL" id="U62966">
    <property type="protein sequence ID" value="AAB53837.1"/>
    <property type="molecule type" value="mRNA"/>
</dbReference>
<dbReference type="EMBL" id="U62967">
    <property type="protein sequence ID" value="AAB53838.1"/>
    <property type="molecule type" value="mRNA"/>
</dbReference>
<dbReference type="EMBL" id="U62968">
    <property type="protein sequence ID" value="AAB53839.1"/>
    <property type="molecule type" value="mRNA"/>
</dbReference>
<dbReference type="EMBL" id="AF187978">
    <property type="protein sequence ID" value="AAF15353.1"/>
    <property type="molecule type" value="Genomic_DNA"/>
</dbReference>
<dbReference type="EMBL" id="AF187969">
    <property type="protein sequence ID" value="AAF15353.1"/>
    <property type="status" value="JOINED"/>
    <property type="molecule type" value="Genomic_DNA"/>
</dbReference>
<dbReference type="EMBL" id="AF187970">
    <property type="protein sequence ID" value="AAF15353.1"/>
    <property type="status" value="JOINED"/>
    <property type="molecule type" value="Genomic_DNA"/>
</dbReference>
<dbReference type="EMBL" id="AF187971">
    <property type="protein sequence ID" value="AAF15353.1"/>
    <property type="status" value="JOINED"/>
    <property type="molecule type" value="Genomic_DNA"/>
</dbReference>
<dbReference type="EMBL" id="AF187972">
    <property type="protein sequence ID" value="AAF15353.1"/>
    <property type="status" value="JOINED"/>
    <property type="molecule type" value="Genomic_DNA"/>
</dbReference>
<dbReference type="EMBL" id="AF187973">
    <property type="protein sequence ID" value="AAF15353.1"/>
    <property type="status" value="JOINED"/>
    <property type="molecule type" value="Genomic_DNA"/>
</dbReference>
<dbReference type="EMBL" id="AF187974">
    <property type="protein sequence ID" value="AAF15353.1"/>
    <property type="status" value="JOINED"/>
    <property type="molecule type" value="Genomic_DNA"/>
</dbReference>
<dbReference type="EMBL" id="AF187975">
    <property type="protein sequence ID" value="AAF15353.1"/>
    <property type="status" value="JOINED"/>
    <property type="molecule type" value="Genomic_DNA"/>
</dbReference>
<dbReference type="EMBL" id="AF187976">
    <property type="protein sequence ID" value="AAF15353.1"/>
    <property type="status" value="JOINED"/>
    <property type="molecule type" value="Genomic_DNA"/>
</dbReference>
<dbReference type="EMBL" id="AF187977">
    <property type="protein sequence ID" value="AAF15353.1"/>
    <property type="status" value="JOINED"/>
    <property type="molecule type" value="Genomic_DNA"/>
</dbReference>
<dbReference type="EMBL" id="AK291997">
    <property type="protein sequence ID" value="BAF84686.1"/>
    <property type="molecule type" value="mRNA"/>
</dbReference>
<dbReference type="EMBL" id="AC087468">
    <property type="status" value="NOT_ANNOTATED_CDS"/>
    <property type="molecule type" value="Genomic_DNA"/>
</dbReference>
<dbReference type="EMBL" id="AC103741">
    <property type="status" value="NOT_ANNOTATED_CDS"/>
    <property type="molecule type" value="Genomic_DNA"/>
</dbReference>
<dbReference type="EMBL" id="BC029788">
    <property type="protein sequence ID" value="AAH29788.1"/>
    <property type="molecule type" value="mRNA"/>
</dbReference>
<dbReference type="EMBL" id="BC039898">
    <property type="protein sequence ID" value="AAH39898.1"/>
    <property type="molecule type" value="mRNA"/>
</dbReference>
<dbReference type="EMBL" id="BC126204">
    <property type="protein sequence ID" value="AAI26205.1"/>
    <property type="molecule type" value="mRNA"/>
</dbReference>
<dbReference type="EMBL" id="BC126206">
    <property type="protein sequence ID" value="AAI26207.1"/>
    <property type="molecule type" value="mRNA"/>
</dbReference>
<dbReference type="CCDS" id="CCDS10334.1">
    <molecule id="O00337-1"/>
</dbReference>
<dbReference type="CCDS" id="CCDS10335.1">
    <molecule id="O00337-2"/>
</dbReference>
<dbReference type="RefSeq" id="NP_001274691.1">
    <molecule id="O00337-1"/>
    <property type="nucleotide sequence ID" value="NM_001287762.2"/>
</dbReference>
<dbReference type="RefSeq" id="NP_004204.3">
    <molecule id="O00337-1"/>
    <property type="nucleotide sequence ID" value="NM_004213.4"/>
</dbReference>
<dbReference type="RefSeq" id="NP_964014.1">
    <molecule id="O00337-2"/>
    <property type="nucleotide sequence ID" value="NM_201651.3"/>
</dbReference>
<dbReference type="SMR" id="O00337"/>
<dbReference type="BioGRID" id="114601">
    <property type="interactions" value="1"/>
</dbReference>
<dbReference type="FunCoup" id="O00337">
    <property type="interactions" value="31"/>
</dbReference>
<dbReference type="IntAct" id="O00337">
    <property type="interactions" value="1"/>
</dbReference>
<dbReference type="STRING" id="9606.ENSP00000378074"/>
<dbReference type="BindingDB" id="O00337"/>
<dbReference type="ChEMBL" id="CHEMBL5551"/>
<dbReference type="DrugBank" id="DB00640">
    <property type="generic name" value="Adenosine"/>
</dbReference>
<dbReference type="DrugBank" id="DB01262">
    <property type="generic name" value="Decitabine"/>
</dbReference>
<dbReference type="DrugBank" id="DB00441">
    <property type="generic name" value="Gemcitabine"/>
</dbReference>
<dbReference type="DrugBank" id="DB00649">
    <property type="generic name" value="Stavudine"/>
</dbReference>
<dbReference type="DrugBank" id="DB09327">
    <property type="generic name" value="Tegafur-uracil"/>
</dbReference>
<dbReference type="DrugBank" id="DB00432">
    <property type="generic name" value="Trifluridine"/>
</dbReference>
<dbReference type="DrugBank" id="DB00495">
    <property type="generic name" value="Zidovudine"/>
</dbReference>
<dbReference type="DrugCentral" id="O00337"/>
<dbReference type="TCDB" id="2.A.41.2.13">
    <property type="family name" value="the concentrative nucleoside transporter (cnt) family"/>
</dbReference>
<dbReference type="TCDB" id="2.A.41.2.3">
    <property type="family name" value="the concentrative nucleoside transporter (cnt) family"/>
</dbReference>
<dbReference type="GlyCosmos" id="O00337">
    <property type="glycosylation" value="2 sites, No reported glycans"/>
</dbReference>
<dbReference type="GlyGen" id="O00337">
    <property type="glycosylation" value="3 sites, 4 N-linked glycans (1 site)"/>
</dbReference>
<dbReference type="iPTMnet" id="O00337"/>
<dbReference type="PhosphoSitePlus" id="O00337"/>
<dbReference type="BioMuta" id="SLC28A1"/>
<dbReference type="jPOST" id="O00337"/>
<dbReference type="MassIVE" id="O00337"/>
<dbReference type="PaxDb" id="9606-ENSP00000378074"/>
<dbReference type="PeptideAtlas" id="O00337"/>
<dbReference type="ProteomicsDB" id="47852">
    <molecule id="O00337-1"/>
</dbReference>
<dbReference type="Antibodypedia" id="65918">
    <property type="antibodies" value="69 antibodies from 19 providers"/>
</dbReference>
<dbReference type="DNASU" id="9154"/>
<dbReference type="Ensembl" id="ENST00000286749.3">
    <molecule id="O00337-1"/>
    <property type="protein sequence ID" value="ENSP00000286749.3"/>
    <property type="gene ID" value="ENSG00000156222.12"/>
</dbReference>
<dbReference type="Ensembl" id="ENST00000338602.6">
    <molecule id="O00337-2"/>
    <property type="protein sequence ID" value="ENSP00000341629.2"/>
    <property type="gene ID" value="ENSG00000156222.12"/>
</dbReference>
<dbReference type="Ensembl" id="ENST00000394573.6">
    <molecule id="O00337-1"/>
    <property type="protein sequence ID" value="ENSP00000378074.1"/>
    <property type="gene ID" value="ENSG00000156222.12"/>
</dbReference>
<dbReference type="GeneID" id="9154"/>
<dbReference type="KEGG" id="hsa:9154"/>
<dbReference type="MANE-Select" id="ENST00000394573.6">
    <property type="protein sequence ID" value="ENSP00000378074.1"/>
    <property type="RefSeq nucleotide sequence ID" value="NM_004213.5"/>
    <property type="RefSeq protein sequence ID" value="NP_004204.3"/>
</dbReference>
<dbReference type="UCSC" id="uc002blf.5">
    <molecule id="O00337-1"/>
    <property type="organism name" value="human"/>
</dbReference>
<dbReference type="AGR" id="HGNC:11001"/>
<dbReference type="CTD" id="9154"/>
<dbReference type="DisGeNET" id="9154"/>
<dbReference type="GeneCards" id="SLC28A1"/>
<dbReference type="HGNC" id="HGNC:11001">
    <property type="gene designation" value="SLC28A1"/>
</dbReference>
<dbReference type="HPA" id="ENSG00000156222">
    <property type="expression patterns" value="Group enriched (intestine, kidney, liver)"/>
</dbReference>
<dbReference type="MalaCards" id="SLC28A1"/>
<dbReference type="MIM" id="606207">
    <property type="type" value="gene"/>
</dbReference>
<dbReference type="MIM" id="618477">
    <property type="type" value="phenotype"/>
</dbReference>
<dbReference type="neXtProt" id="NX_O00337"/>
<dbReference type="OpenTargets" id="ENSG00000156222"/>
<dbReference type="PharmGKB" id="PA387"/>
<dbReference type="VEuPathDB" id="HostDB:ENSG00000156222"/>
<dbReference type="eggNOG" id="KOG3747">
    <property type="taxonomic scope" value="Eukaryota"/>
</dbReference>
<dbReference type="GeneTree" id="ENSGT00390000016025"/>
<dbReference type="HOGENOM" id="CLU_1532017_0_0_1"/>
<dbReference type="InParanoid" id="O00337"/>
<dbReference type="OMA" id="IVWHTVI"/>
<dbReference type="OrthoDB" id="6075923at2759"/>
<dbReference type="PAN-GO" id="O00337">
    <property type="GO annotations" value="6 GO annotations based on evolutionary models"/>
</dbReference>
<dbReference type="PhylomeDB" id="O00337"/>
<dbReference type="TreeFam" id="TF314131"/>
<dbReference type="PathwayCommons" id="O00337"/>
<dbReference type="Reactome" id="R-HSA-83936">
    <property type="pathway name" value="Transport of nucleosides and free purine and pyrimidine bases across the plasma membrane"/>
</dbReference>
<dbReference type="SignaLink" id="O00337"/>
<dbReference type="BioGRID-ORCS" id="9154">
    <property type="hits" value="16 hits in 1142 CRISPR screens"/>
</dbReference>
<dbReference type="ChiTaRS" id="SLC28A1">
    <property type="organism name" value="human"/>
</dbReference>
<dbReference type="GeneWiki" id="Concentrative_nucleoside_transporter_1"/>
<dbReference type="GenomeRNAi" id="9154"/>
<dbReference type="Pharos" id="O00337">
    <property type="development level" value="Tbio"/>
</dbReference>
<dbReference type="PRO" id="PR:O00337"/>
<dbReference type="Proteomes" id="UP000005640">
    <property type="component" value="Chromosome 15"/>
</dbReference>
<dbReference type="RNAct" id="O00337">
    <property type="molecule type" value="protein"/>
</dbReference>
<dbReference type="Bgee" id="ENSG00000156222">
    <property type="expression patterns" value="Expressed in right lobe of liver and 75 other cell types or tissues"/>
</dbReference>
<dbReference type="ExpressionAtlas" id="O00337">
    <property type="expression patterns" value="baseline and differential"/>
</dbReference>
<dbReference type="GO" id="GO:0016324">
    <property type="term" value="C:apical plasma membrane"/>
    <property type="evidence" value="ECO:0000314"/>
    <property type="project" value="UniProtKB"/>
</dbReference>
<dbReference type="GO" id="GO:0031526">
    <property type="term" value="C:brush border membrane"/>
    <property type="evidence" value="ECO:0000250"/>
    <property type="project" value="ARUK-UCL"/>
</dbReference>
<dbReference type="GO" id="GO:0005829">
    <property type="term" value="C:cytosol"/>
    <property type="evidence" value="ECO:0000314"/>
    <property type="project" value="HPA"/>
</dbReference>
<dbReference type="GO" id="GO:0016607">
    <property type="term" value="C:nuclear speck"/>
    <property type="evidence" value="ECO:0000314"/>
    <property type="project" value="HPA"/>
</dbReference>
<dbReference type="GO" id="GO:0005886">
    <property type="term" value="C:plasma membrane"/>
    <property type="evidence" value="ECO:0000314"/>
    <property type="project" value="HPA"/>
</dbReference>
<dbReference type="GO" id="GO:1901474">
    <property type="term" value="F:azole transmembrane transporter activity"/>
    <property type="evidence" value="ECO:0000314"/>
    <property type="project" value="ARUK-UCL"/>
</dbReference>
<dbReference type="GO" id="GO:0015212">
    <property type="term" value="F:cytidine transmembrane transporter activity"/>
    <property type="evidence" value="ECO:0000304"/>
    <property type="project" value="ARUK-UCL"/>
</dbReference>
<dbReference type="GO" id="GO:0005415">
    <property type="term" value="F:nucleoside:sodium symporter activity"/>
    <property type="evidence" value="ECO:0000304"/>
    <property type="project" value="Reactome"/>
</dbReference>
<dbReference type="GO" id="GO:0005345">
    <property type="term" value="F:purine nucleobase transmembrane transporter activity"/>
    <property type="evidence" value="ECO:0000303"/>
    <property type="project" value="ARUK-UCL"/>
</dbReference>
<dbReference type="GO" id="GO:0015389">
    <property type="term" value="F:pyrimidine- and adenosine-specific:sodium symporter activity"/>
    <property type="evidence" value="ECO:0000314"/>
    <property type="project" value="UniProtKB"/>
</dbReference>
<dbReference type="GO" id="GO:0015213">
    <property type="term" value="F:uridine transmembrane transporter activity"/>
    <property type="evidence" value="ECO:0000314"/>
    <property type="project" value="ARUK-UCL"/>
</dbReference>
<dbReference type="GO" id="GO:0045117">
    <property type="term" value="P:azole transmembrane transport"/>
    <property type="evidence" value="ECO:0000314"/>
    <property type="project" value="ARUK-UCL"/>
</dbReference>
<dbReference type="GO" id="GO:0015861">
    <property type="term" value="P:cytidine transport"/>
    <property type="evidence" value="ECO:0000314"/>
    <property type="project" value="UniProtKB"/>
</dbReference>
<dbReference type="GO" id="GO:0180015">
    <property type="term" value="P:nucleoside import across plasma membrane"/>
    <property type="evidence" value="ECO:0000315"/>
    <property type="project" value="UniProtKB"/>
</dbReference>
<dbReference type="GO" id="GO:1901642">
    <property type="term" value="P:nucleoside transmembrane transport"/>
    <property type="evidence" value="ECO:0000314"/>
    <property type="project" value="ARUK-UCL"/>
</dbReference>
<dbReference type="GO" id="GO:1904823">
    <property type="term" value="P:purine nucleobase transmembrane transport"/>
    <property type="evidence" value="ECO:0000303"/>
    <property type="project" value="ARUK-UCL"/>
</dbReference>
<dbReference type="GO" id="GO:0015855">
    <property type="term" value="P:pyrimidine nucleobase transport"/>
    <property type="evidence" value="ECO:0000318"/>
    <property type="project" value="GO_Central"/>
</dbReference>
<dbReference type="GO" id="GO:0072531">
    <property type="term" value="P:pyrimidine-containing compound transmembrane transport"/>
    <property type="evidence" value="ECO:0000314"/>
    <property type="project" value="ARUK-UCL"/>
</dbReference>
<dbReference type="GO" id="GO:0015862">
    <property type="term" value="P:uridine transmembrane transport"/>
    <property type="evidence" value="ECO:0000314"/>
    <property type="project" value="UniProtKB"/>
</dbReference>
<dbReference type="InterPro" id="IPR008276">
    <property type="entry name" value="C_nuclsd_transpt"/>
</dbReference>
<dbReference type="InterPro" id="IPR018270">
    <property type="entry name" value="C_nuclsd_transpt_met_bac"/>
</dbReference>
<dbReference type="InterPro" id="IPR011657">
    <property type="entry name" value="CNT_C_dom"/>
</dbReference>
<dbReference type="InterPro" id="IPR002668">
    <property type="entry name" value="CNT_N_dom"/>
</dbReference>
<dbReference type="InterPro" id="IPR011642">
    <property type="entry name" value="Gate_dom"/>
</dbReference>
<dbReference type="NCBIfam" id="TIGR00804">
    <property type="entry name" value="nupC"/>
    <property type="match status" value="1"/>
</dbReference>
<dbReference type="PANTHER" id="PTHR10590">
    <property type="entry name" value="SODIUM/NUCLEOSIDE COTRANSPORTER"/>
    <property type="match status" value="1"/>
</dbReference>
<dbReference type="PANTHER" id="PTHR10590:SF16">
    <property type="entry name" value="SODIUM_NUCLEOSIDE COTRANSPORTER 1"/>
    <property type="match status" value="1"/>
</dbReference>
<dbReference type="Pfam" id="PF07670">
    <property type="entry name" value="Gate"/>
    <property type="match status" value="1"/>
</dbReference>
<dbReference type="Pfam" id="PF07662">
    <property type="entry name" value="Nucleos_tra2_C"/>
    <property type="match status" value="1"/>
</dbReference>
<dbReference type="Pfam" id="PF01773">
    <property type="entry name" value="Nucleos_tra2_N"/>
    <property type="match status" value="1"/>
</dbReference>
<accession>O00337</accession>
<accession>A0AV42</accession>
<accession>A8K7I2</accession>
<accession>O00335</accession>
<accession>O00336</accession>
<accession>Q5U5S6</accession>
<accession>Q5U648</accession>
<accession>Q9UEZ9</accession>
<evidence type="ECO:0000250" key="1">
    <source>
        <dbReference type="UniProtKB" id="Q62674"/>
    </source>
</evidence>
<evidence type="ECO:0000255" key="2"/>
<evidence type="ECO:0000269" key="3">
    <source>
    </source>
</evidence>
<evidence type="ECO:0000269" key="4">
    <source>
    </source>
</evidence>
<evidence type="ECO:0000269" key="5">
    <source>
    </source>
</evidence>
<evidence type="ECO:0000269" key="6">
    <source>
    </source>
</evidence>
<evidence type="ECO:0000269" key="7">
    <source>
    </source>
</evidence>
<evidence type="ECO:0000269" key="8">
    <source>
    </source>
</evidence>
<evidence type="ECO:0000269" key="9">
    <source>
    </source>
</evidence>
<evidence type="ECO:0000269" key="10">
    <source>
    </source>
</evidence>
<evidence type="ECO:0000269" key="11">
    <source>
    </source>
</evidence>
<evidence type="ECO:0000269" key="12">
    <source>
    </source>
</evidence>
<evidence type="ECO:0000269" key="13">
    <source>
    </source>
</evidence>
<evidence type="ECO:0000269" key="14">
    <source ref="2"/>
</evidence>
<evidence type="ECO:0000303" key="15">
    <source>
    </source>
</evidence>
<evidence type="ECO:0000303" key="16">
    <source>
    </source>
</evidence>
<evidence type="ECO:0000305" key="17"/>
<evidence type="ECO:0000305" key="18">
    <source>
    </source>
</evidence>
<evidence type="ECO:0000312" key="19">
    <source>
        <dbReference type="HGNC" id="HGNC:11001"/>
    </source>
</evidence>
<reference key="1">
    <citation type="journal article" date="1997" name="Am. J. Physiol.">
        <title>Molecular cloning and functional expression of cDNAs encoding a human Na+-nucleoside cotransporter (hCNT1).</title>
        <authorList>
            <person name="Ritzel M.W.L."/>
            <person name="Yao S.Y.M."/>
            <person name="Huang M.-Y."/>
            <person name="Elliott J.F."/>
            <person name="Cass C.E."/>
            <person name="Young J.D."/>
        </authorList>
    </citation>
    <scope>NUCLEOTIDE SEQUENCE [MRNA] (ISOFORM 1)</scope>
    <scope>FUNCTION</scope>
    <scope>TRANSPORTER ACTIVITY</scope>
    <scope>TISSUE SPECIFICITY</scope>
    <scope>POLYMORPHISM</scope>
    <scope>VARIANTS A GLY-34; VAL-140 INS AND ILE-189</scope>
    <scope>VARIANTS B SER-409 AND ASN-521</scope>
    <scope>VARIANT C ASN-521</scope>
    <source>
        <tissue>Kidney</tissue>
    </source>
</reference>
<reference key="2">
    <citation type="submission" date="1999-09" db="EMBL/GenBank/DDBJ databases">
        <title>Genomic organization and sequence of the gene encoding the human sodium-dependent, pyrimidine-selective nucleoside transporter (CNT1).</title>
        <authorList>
            <person name="Ritzel M.W.L."/>
            <person name="Ritzel R.G."/>
            <person name="Cass C.E."/>
            <person name="Young J.D."/>
        </authorList>
    </citation>
    <scope>NUCLEOTIDE SEQUENCE [GENOMIC DNA]</scope>
    <scope>VARIANT A GLY-34</scope>
</reference>
<reference key="3">
    <citation type="journal article" date="2004" name="Nat. Genet.">
        <title>Complete sequencing and characterization of 21,243 full-length human cDNAs.</title>
        <authorList>
            <person name="Ota T."/>
            <person name="Suzuki Y."/>
            <person name="Nishikawa T."/>
            <person name="Otsuki T."/>
            <person name="Sugiyama T."/>
            <person name="Irie R."/>
            <person name="Wakamatsu A."/>
            <person name="Hayashi K."/>
            <person name="Sato H."/>
            <person name="Nagai K."/>
            <person name="Kimura K."/>
            <person name="Makita H."/>
            <person name="Sekine M."/>
            <person name="Obayashi M."/>
            <person name="Nishi T."/>
            <person name="Shibahara T."/>
            <person name="Tanaka T."/>
            <person name="Ishii S."/>
            <person name="Yamamoto J."/>
            <person name="Saito K."/>
            <person name="Kawai Y."/>
            <person name="Isono Y."/>
            <person name="Nakamura Y."/>
            <person name="Nagahari K."/>
            <person name="Murakami K."/>
            <person name="Yasuda T."/>
            <person name="Iwayanagi T."/>
            <person name="Wagatsuma M."/>
            <person name="Shiratori A."/>
            <person name="Sudo H."/>
            <person name="Hosoiri T."/>
            <person name="Kaku Y."/>
            <person name="Kodaira H."/>
            <person name="Kondo H."/>
            <person name="Sugawara M."/>
            <person name="Takahashi M."/>
            <person name="Kanda K."/>
            <person name="Yokoi T."/>
            <person name="Furuya T."/>
            <person name="Kikkawa E."/>
            <person name="Omura Y."/>
            <person name="Abe K."/>
            <person name="Kamihara K."/>
            <person name="Katsuta N."/>
            <person name="Sato K."/>
            <person name="Tanikawa M."/>
            <person name="Yamazaki M."/>
            <person name="Ninomiya K."/>
            <person name="Ishibashi T."/>
            <person name="Yamashita H."/>
            <person name="Murakawa K."/>
            <person name="Fujimori K."/>
            <person name="Tanai H."/>
            <person name="Kimata M."/>
            <person name="Watanabe M."/>
            <person name="Hiraoka S."/>
            <person name="Chiba Y."/>
            <person name="Ishida S."/>
            <person name="Ono Y."/>
            <person name="Takiguchi S."/>
            <person name="Watanabe S."/>
            <person name="Yosida M."/>
            <person name="Hotuta T."/>
            <person name="Kusano J."/>
            <person name="Kanehori K."/>
            <person name="Takahashi-Fujii A."/>
            <person name="Hara H."/>
            <person name="Tanase T.-O."/>
            <person name="Nomura Y."/>
            <person name="Togiya S."/>
            <person name="Komai F."/>
            <person name="Hara R."/>
            <person name="Takeuchi K."/>
            <person name="Arita M."/>
            <person name="Imose N."/>
            <person name="Musashino K."/>
            <person name="Yuuki H."/>
            <person name="Oshima A."/>
            <person name="Sasaki N."/>
            <person name="Aotsuka S."/>
            <person name="Yoshikawa Y."/>
            <person name="Matsunawa H."/>
            <person name="Ichihara T."/>
            <person name="Shiohata N."/>
            <person name="Sano S."/>
            <person name="Moriya S."/>
            <person name="Momiyama H."/>
            <person name="Satoh N."/>
            <person name="Takami S."/>
            <person name="Terashima Y."/>
            <person name="Suzuki O."/>
            <person name="Nakagawa S."/>
            <person name="Senoh A."/>
            <person name="Mizoguchi H."/>
            <person name="Goto Y."/>
            <person name="Shimizu F."/>
            <person name="Wakebe H."/>
            <person name="Hishigaki H."/>
            <person name="Watanabe T."/>
            <person name="Sugiyama A."/>
            <person name="Takemoto M."/>
            <person name="Kawakami B."/>
            <person name="Yamazaki M."/>
            <person name="Watanabe K."/>
            <person name="Kumagai A."/>
            <person name="Itakura S."/>
            <person name="Fukuzumi Y."/>
            <person name="Fujimori Y."/>
            <person name="Komiyama M."/>
            <person name="Tashiro H."/>
            <person name="Tanigami A."/>
            <person name="Fujiwara T."/>
            <person name="Ono T."/>
            <person name="Yamada K."/>
            <person name="Fujii Y."/>
            <person name="Ozaki K."/>
            <person name="Hirao M."/>
            <person name="Ohmori Y."/>
            <person name="Kawabata A."/>
            <person name="Hikiji T."/>
            <person name="Kobatake N."/>
            <person name="Inagaki H."/>
            <person name="Ikema Y."/>
            <person name="Okamoto S."/>
            <person name="Okitani R."/>
            <person name="Kawakami T."/>
            <person name="Noguchi S."/>
            <person name="Itoh T."/>
            <person name="Shigeta K."/>
            <person name="Senba T."/>
            <person name="Matsumura K."/>
            <person name="Nakajima Y."/>
            <person name="Mizuno T."/>
            <person name="Morinaga M."/>
            <person name="Sasaki M."/>
            <person name="Togashi T."/>
            <person name="Oyama M."/>
            <person name="Hata H."/>
            <person name="Watanabe M."/>
            <person name="Komatsu T."/>
            <person name="Mizushima-Sugano J."/>
            <person name="Satoh T."/>
            <person name="Shirai Y."/>
            <person name="Takahashi Y."/>
            <person name="Nakagawa K."/>
            <person name="Okumura K."/>
            <person name="Nagase T."/>
            <person name="Nomura N."/>
            <person name="Kikuchi H."/>
            <person name="Masuho Y."/>
            <person name="Yamashita R."/>
            <person name="Nakai K."/>
            <person name="Yada T."/>
            <person name="Nakamura Y."/>
            <person name="Ohara O."/>
            <person name="Isogai T."/>
            <person name="Sugano S."/>
        </authorList>
    </citation>
    <scope>NUCLEOTIDE SEQUENCE [LARGE SCALE MRNA]</scope>
    <scope>VARIANT A ILE-189</scope>
    <scope>VARIANT B ASN-521</scope>
    <scope>VARIANT C ASN-521</scope>
    <source>
        <tissue>Small intestine</tissue>
    </source>
</reference>
<reference key="4">
    <citation type="journal article" date="2006" name="Nature">
        <title>Analysis of the DNA sequence and duplication history of human chromosome 15.</title>
        <authorList>
            <person name="Zody M.C."/>
            <person name="Garber M."/>
            <person name="Sharpe T."/>
            <person name="Young S.K."/>
            <person name="Rowen L."/>
            <person name="O'Neill K."/>
            <person name="Whittaker C.A."/>
            <person name="Kamal M."/>
            <person name="Chang J.L."/>
            <person name="Cuomo C.A."/>
            <person name="Dewar K."/>
            <person name="FitzGerald M.G."/>
            <person name="Kodira C.D."/>
            <person name="Madan A."/>
            <person name="Qin S."/>
            <person name="Yang X."/>
            <person name="Abbasi N."/>
            <person name="Abouelleil A."/>
            <person name="Arachchi H.M."/>
            <person name="Baradarani L."/>
            <person name="Birditt B."/>
            <person name="Bloom S."/>
            <person name="Bloom T."/>
            <person name="Borowsky M.L."/>
            <person name="Burke J."/>
            <person name="Butler J."/>
            <person name="Cook A."/>
            <person name="DeArellano K."/>
            <person name="DeCaprio D."/>
            <person name="Dorris L. III"/>
            <person name="Dors M."/>
            <person name="Eichler E.E."/>
            <person name="Engels R."/>
            <person name="Fahey J."/>
            <person name="Fleetwood P."/>
            <person name="Friedman C."/>
            <person name="Gearin G."/>
            <person name="Hall J.L."/>
            <person name="Hensley G."/>
            <person name="Johnson E."/>
            <person name="Jones C."/>
            <person name="Kamat A."/>
            <person name="Kaur A."/>
            <person name="Locke D.P."/>
            <person name="Madan A."/>
            <person name="Munson G."/>
            <person name="Jaffe D.B."/>
            <person name="Lui A."/>
            <person name="Macdonald P."/>
            <person name="Mauceli E."/>
            <person name="Naylor J.W."/>
            <person name="Nesbitt R."/>
            <person name="Nicol R."/>
            <person name="O'Leary S.B."/>
            <person name="Ratcliffe A."/>
            <person name="Rounsley S."/>
            <person name="She X."/>
            <person name="Sneddon K.M.B."/>
            <person name="Stewart S."/>
            <person name="Sougnez C."/>
            <person name="Stone S.M."/>
            <person name="Topham K."/>
            <person name="Vincent D."/>
            <person name="Wang S."/>
            <person name="Zimmer A.R."/>
            <person name="Birren B.W."/>
            <person name="Hood L."/>
            <person name="Lander E.S."/>
            <person name="Nusbaum C."/>
        </authorList>
    </citation>
    <scope>NUCLEOTIDE SEQUENCE [LARGE SCALE GENOMIC DNA]</scope>
</reference>
<reference key="5">
    <citation type="journal article" date="2004" name="Genome Res.">
        <title>The status, quality, and expansion of the NIH full-length cDNA project: the Mammalian Gene Collection (MGC).</title>
        <authorList>
            <consortium name="The MGC Project Team"/>
        </authorList>
    </citation>
    <scope>NUCLEOTIDE SEQUENCE [LARGE SCALE MRNA] (ISOFORMS 1 AND 2)</scope>
    <scope>VARIANTS A VAL-140 INS AND CYS-510</scope>
    <source>
        <tissue>Colon</tissue>
    </source>
</reference>
<reference key="6">
    <citation type="journal article" date="1999" name="J. Biol. Chem.">
        <title>Identification of amino acid residues responsible for the pyrimidine and purine nucleoside specificities of human concentrative Na(+) nucleoside cotransporters hCNT1 and hCNT2.</title>
        <authorList>
            <person name="Loewen S.K."/>
            <person name="Ng A.M.L."/>
            <person name="Yao S.Y.M."/>
            <person name="Cass C.E."/>
            <person name="Baldwin S.A."/>
            <person name="Young J.D."/>
        </authorList>
    </citation>
    <scope>FUNCTION</scope>
    <scope>TRANSPORTER ACTIVITY</scope>
    <scope>MUTAGENESIS OF SER-318; GLN-319 AND SER-352</scope>
</reference>
<reference key="7">
    <citation type="journal article" date="2004" name="J. Biol. Chem.">
        <title>Electrophysiological characterization of the human Na(+)/nucleoside cotransporter 1 (hCNT1) and role of adenosine on hCNT1 function.</title>
        <authorList>
            <person name="Larrayoz I.M."/>
            <person name="Casado F.J."/>
            <person name="Pastor-Anglada M."/>
            <person name="Lostao M.P."/>
        </authorList>
    </citation>
    <scope>FUNCTION</scope>
    <scope>TRANSPORTER ACTIVITY</scope>
    <scope>ACTIVITY REGULATION</scope>
</reference>
<reference key="8">
    <citation type="journal article" date="2004" name="J. Physiol. (Lond.)">
        <title>Electrophysiological characterization of a recombinant human Na+-coupled nucleoside transporter (hCNT1) produced in Xenopus oocytes.</title>
        <authorList>
            <person name="Smith K.M."/>
            <person name="Ng A.M."/>
            <person name="Yao S.Y."/>
            <person name="Labedz K.A."/>
            <person name="Knaus E.E."/>
            <person name="Wiebe L.I."/>
            <person name="Cass C.E."/>
            <person name="Baldwin S.A."/>
            <person name="Chen X.Z."/>
            <person name="Karpinski E."/>
            <person name="Young J.D."/>
        </authorList>
    </citation>
    <scope>FUNCTION</scope>
    <scope>TRANSPORTER ACTIVITY</scope>
</reference>
<reference key="9">
    <citation type="journal article" date="2011" name="J. Biol. Chem.">
        <title>Nucleobase transport by human equilibrative nucleoside transporter 1 (hENT1).</title>
        <authorList>
            <person name="Yao S.Y."/>
            <person name="Ng A.M."/>
            <person name="Cass C.E."/>
            <person name="Baldwin S.A."/>
            <person name="Young J.D."/>
        </authorList>
    </citation>
    <scope>FUNCTION</scope>
    <scope>TRANSPORTER ACTIVITY</scope>
</reference>
<reference key="10">
    <citation type="journal article" date="2012" name="Am. J. Physiol.">
        <title>Functional analysis of the human concentrative nucleoside transporter-1 variant hCNT1S546P provides insight into the sodium-binding pocket.</title>
        <authorList>
            <person name="Cano-Soldado P."/>
            <person name="Gorraitz E."/>
            <person name="Errasti-Murugarren E."/>
            <person name="Casado F.J."/>
            <person name="Lostao M.P."/>
            <person name="Pastor-Anglada M."/>
        </authorList>
    </citation>
    <scope>FUNCTION</scope>
    <scope>TRANSPORTER ACTIVITY</scope>
    <scope>SUBCELLULAR LOCATION</scope>
    <scope>CHARACTERIZATION OF VARIANT URCTU PRO-546</scope>
    <scope>MUTAGENESIS OF SER-546</scope>
</reference>
<reference key="11">
    <citation type="journal article" date="2014" name="J. Proteomics">
        <title>An enzyme assisted RP-RPLC approach for in-depth analysis of human liver phosphoproteome.</title>
        <authorList>
            <person name="Bian Y."/>
            <person name="Song C."/>
            <person name="Cheng K."/>
            <person name="Dong M."/>
            <person name="Wang F."/>
            <person name="Huang J."/>
            <person name="Sun D."/>
            <person name="Wang L."/>
            <person name="Ye M."/>
            <person name="Zou H."/>
        </authorList>
    </citation>
    <scope>IDENTIFICATION BY MASS SPECTROMETRY [LARGE SCALE ANALYSIS]</scope>
    <source>
        <tissue>Liver</tissue>
    </source>
</reference>
<reference key="12">
    <citation type="journal article" date="2020" name="Biochim. Biophys. Acta">
        <title>HPLC reveals novel features of nucleoside and nucleobase homeostasis, nucleoside metabolism and nucleoside transport.</title>
        <authorList>
            <person name="Altaweraqi R.A."/>
            <person name="Yao S.Y.M."/>
            <person name="Smith K.M."/>
            <person name="Cass C.E."/>
            <person name="Young J.D."/>
        </authorList>
    </citation>
    <scope>FUNCTION</scope>
    <scope>TRANSPORTER ACTIVITY</scope>
    <scope>ACTIVITY REGULATION</scope>
</reference>
<reference key="13">
    <citation type="journal article" date="2019" name="Biochim. Biophys. Acta">
        <title>Deficiency of perforin and hCNT1, a novel inborn error of pyrimidine metabolism, associated with a rapidly developing lethal phenotype due to multi-organ failure.</title>
        <authorList>
            <person name="Perez-Torras S."/>
            <person name="Mata-Ventosa A."/>
            <person name="Droegemoeller B."/>
            <person name="Tarailo-Graovac M."/>
            <person name="Meijer J."/>
            <person name="Meinsma R."/>
            <person name="van Cruchten A.G."/>
            <person name="Kulik W."/>
            <person name="Viel-Oliva A."/>
            <person name="Bidon-Chanal A."/>
            <person name="Ross C.J."/>
            <person name="Wassermann W.W."/>
            <person name="van Karnebeek C.D.M."/>
            <person name="Pastor-Anglada M."/>
            <person name="van Kuilenburg A.B.P."/>
        </authorList>
    </citation>
    <scope>INVOLVEMENT IN URCTU</scope>
    <scope>FUNCTION</scope>
    <scope>TRANSPORTER ACTIVITY</scope>
    <scope>GLYCOSYLATION</scope>
    <scope>VARIANT URCTU GLN-561</scope>
    <scope>VARIANT CYS-510</scope>
    <scope>CHARACTERIZATION OF VARIANT URCTU GLN-561</scope>
    <scope>CHARACTERIZATION OF VARIANT CYS-510</scope>
</reference>
<reference key="14">
    <citation type="journal article" date="2019" name="J. Inherit. Metab. Dis.">
        <title>Functional disruption of pyrimidine nucleoside transporter CNT1 results in a novel inborn error of metabolism with high excretion of uridine and cytidine.</title>
        <authorList>
            <person name="Wevers R.A."/>
            <person name="Christensen M."/>
            <person name="Engelke U.F.H."/>
            <person name="Geuer S."/>
            <person name="Coene K.L.M."/>
            <person name="Kwast J.T."/>
            <person name="Lund A.M."/>
            <person name="Vissers L.E.L.M."/>
        </authorList>
    </citation>
    <scope>INVOLVEMENT IN URCTU</scope>
    <scope>VARIANT URCTU PRO-546</scope>
</reference>
<name>S28A1_HUMAN</name>
<keyword id="KW-0025">Alternative splicing</keyword>
<keyword id="KW-1003">Cell membrane</keyword>
<keyword id="KW-0225">Disease variant</keyword>
<keyword id="KW-0325">Glycoprotein</keyword>
<keyword id="KW-0472">Membrane</keyword>
<keyword id="KW-1267">Proteomics identification</keyword>
<keyword id="KW-1185">Reference proteome</keyword>
<keyword id="KW-0769">Symport</keyword>
<keyword id="KW-0812">Transmembrane</keyword>
<keyword id="KW-1133">Transmembrane helix</keyword>
<keyword id="KW-0813">Transport</keyword>
<proteinExistence type="evidence at protein level"/>
<gene>
    <name evidence="19" type="primary">SLC28A1</name>
    <name evidence="16" type="synonym">CNT1</name>
</gene>
<comment type="function">
    <text evidence="3 4 6 8 9 10 12 13">Sodium and pyrimidine nucleoside symporter of the plasma membrane that imports uridine, thymidine and cytidine into cells by coupling their transport to the transmembrane sodium electrochemical gradient. Also transports adenosine, an atypical substrate transported with high apparent affinity, but low maximum velocity. Therefore, exhibits the transport characteristics of the nucleoside transport system cit or N2 subtype (N2/cit) (PubMed:10455109, PubMed:14701834, PubMed:15194733, PubMed:21795683, PubMed:21998139, PubMed:30658162, PubMed:32126230, PubMed:9124315). Involved in renal nucleoside (re)absorption (PubMed:30658162).</text>
</comment>
<comment type="catalytic activity">
    <reaction evidence="3 4 8 9 12 13">
        <text>uridine(out) + Na(+)(out) = uridine(in) + Na(+)(in)</text>
        <dbReference type="Rhea" id="RHEA:69887"/>
        <dbReference type="ChEBI" id="CHEBI:16704"/>
        <dbReference type="ChEBI" id="CHEBI:29101"/>
    </reaction>
</comment>
<comment type="catalytic activity">
    <reaction evidence="3 9 13">
        <text>thymidine(out) + Na(+)(out) = thymidine(in) + Na(+)(in)</text>
        <dbReference type="Rhea" id="RHEA:69891"/>
        <dbReference type="ChEBI" id="CHEBI:17748"/>
        <dbReference type="ChEBI" id="CHEBI:29101"/>
    </reaction>
</comment>
<comment type="catalytic activity">
    <reaction evidence="3 9 10 13">
        <text>cytidine(out) + Na(+)(out) = cytidine(in) + Na(+)(in)</text>
        <dbReference type="Rhea" id="RHEA:69895"/>
        <dbReference type="ChEBI" id="CHEBI:17562"/>
        <dbReference type="ChEBI" id="CHEBI:29101"/>
    </reaction>
</comment>
<comment type="catalytic activity">
    <reaction evidence="3 6 9 12 13">
        <text>adenosine(out) + Na(+)(out) = adenosine(in) + Na(+)(in)</text>
        <dbReference type="Rhea" id="RHEA:69927"/>
        <dbReference type="ChEBI" id="CHEBI:16335"/>
        <dbReference type="ChEBI" id="CHEBI:29101"/>
    </reaction>
</comment>
<comment type="activity regulation">
    <text evidence="4 12">Due to its high apparent affinity but slow transport, adenosine could act as a negative regulator of pyrimidine transport under some conditions.</text>
</comment>
<comment type="subcellular location">
    <subcellularLocation>
        <location evidence="9">Cell membrane</location>
        <topology evidence="1">Multi-pass membrane protein</topology>
    </subcellularLocation>
    <subcellularLocation>
        <location evidence="9">Apical cell membrane</location>
        <topology evidence="1">Multi-pass membrane protein</topology>
    </subcellularLocation>
</comment>
<comment type="alternative products">
    <event type="alternative splicing"/>
    <isoform>
        <id>O00337-1</id>
        <name>1</name>
        <sequence type="displayed"/>
    </isoform>
    <isoform>
        <id>O00337-2</id>
        <name>2</name>
        <sequence type="described" ref="VSP_037221 VSP_037222"/>
    </isoform>
</comment>
<comment type="tissue specificity">
    <text evidence="13">Expressed in kidney.</text>
</comment>
<comment type="PTM">
    <text evidence="10">N-glycosylated. N-glycosylation is required for localization to the plasma membrane and the transporter activity.</text>
</comment>
<comment type="polymorphism">
    <text evidence="13">All three alleles (A, B and C) have similar nucleoside transport activity.</text>
</comment>
<comment type="disease" evidence="9 10 11">
    <disease id="DI-05596">
        <name>Uridine-cytidineuria</name>
        <acronym>URCTU</acronym>
        <description>An autosomal recessive inborn error of metabolism characterized by increased urinary uridine and cytidine excretion. It is a likely benign metabolic trait without clinical manifestations.</description>
        <dbReference type="MIM" id="618477"/>
    </disease>
    <text>The disease is caused by variants affecting the gene represented in this entry.</text>
</comment>
<comment type="miscellaneous">
    <text evidence="13">Can also transport the antiviral pyrimidine nucleoside analogs 3'-azido-3'-deoxythymidine (AZT) and 2',3'-dideoxycytidine (ddC). It may be involved in the intestinal absorption and renal handling of pyrimidine nucleoside analogs used to treat acquired immunodeficiency syndrome (AIDS).</text>
</comment>
<comment type="similarity">
    <text evidence="17">Belongs to the concentrative nucleoside transporter (CNT) (TC 2.A.41) family.</text>
</comment>
<organism>
    <name type="scientific">Homo sapiens</name>
    <name type="common">Human</name>
    <dbReference type="NCBI Taxonomy" id="9606"/>
    <lineage>
        <taxon>Eukaryota</taxon>
        <taxon>Metazoa</taxon>
        <taxon>Chordata</taxon>
        <taxon>Craniata</taxon>
        <taxon>Vertebrata</taxon>
        <taxon>Euteleostomi</taxon>
        <taxon>Mammalia</taxon>
        <taxon>Eutheria</taxon>
        <taxon>Euarchontoglires</taxon>
        <taxon>Primates</taxon>
        <taxon>Haplorrhini</taxon>
        <taxon>Catarrhini</taxon>
        <taxon>Hominidae</taxon>
        <taxon>Homo</taxon>
    </lineage>
</organism>
<feature type="chain" id="PRO_0000070446" description="Sodium/nucleoside cotransporter 1">
    <location>
        <begin position="1"/>
        <end position="649"/>
    </location>
</feature>
<feature type="topological domain" description="Cytoplasmic" evidence="1">
    <location>
        <begin position="1"/>
        <end position="80"/>
    </location>
</feature>
<feature type="transmembrane region" description="Helical" evidence="2">
    <location>
        <begin position="81"/>
        <end position="104"/>
    </location>
</feature>
<feature type="topological domain" description="Extracellular" evidence="1">
    <location>
        <begin position="105"/>
        <end position="109"/>
    </location>
</feature>
<feature type="transmembrane region" description="Helical" evidence="2">
    <location>
        <begin position="110"/>
        <end position="128"/>
    </location>
</feature>
<feature type="topological domain" description="Cytoplasmic" evidence="1">
    <location>
        <begin position="129"/>
        <end position="147"/>
    </location>
</feature>
<feature type="transmembrane region" description="Helical" evidence="2">
    <location>
        <begin position="148"/>
        <end position="167"/>
    </location>
</feature>
<feature type="topological domain" description="Extracellular" evidence="1">
    <location>
        <begin position="168"/>
        <end position="178"/>
    </location>
</feature>
<feature type="transmembrane region" description="Helical" evidence="2">
    <location>
        <begin position="179"/>
        <end position="195"/>
    </location>
</feature>
<feature type="topological domain" description="Cytoplasmic" evidence="1">
    <location>
        <begin position="196"/>
        <end position="201"/>
    </location>
</feature>
<feature type="transmembrane region" description="Helical" evidence="2">
    <location>
        <begin position="202"/>
        <end position="222"/>
    </location>
</feature>
<feature type="topological domain" description="Extracellular" evidence="1">
    <location>
        <begin position="223"/>
        <end position="261"/>
    </location>
</feature>
<feature type="transmembrane region" description="Helical" evidence="2">
    <location>
        <begin position="262"/>
        <end position="283"/>
    </location>
</feature>
<feature type="topological domain" description="Cytoplasmic" evidence="1">
    <location>
        <begin position="284"/>
        <end position="294"/>
    </location>
</feature>
<feature type="transmembrane region" description="Helical" evidence="2">
    <location>
        <begin position="295"/>
        <end position="318"/>
    </location>
</feature>
<feature type="topological domain" description="Extracellular" evidence="1">
    <location>
        <begin position="319"/>
        <end position="337"/>
    </location>
</feature>
<feature type="transmembrane region" description="Helical" evidence="2">
    <location>
        <begin position="338"/>
        <end position="360"/>
    </location>
</feature>
<feature type="topological domain" description="Cytoplasmic" evidence="1">
    <location>
        <begin position="361"/>
        <end position="366"/>
    </location>
</feature>
<feature type="transmembrane region" description="Helical" evidence="2">
    <location>
        <begin position="367"/>
        <end position="386"/>
    </location>
</feature>
<feature type="topological domain" description="Extracellular" evidence="1">
    <location>
        <begin position="387"/>
        <end position="423"/>
    </location>
</feature>
<feature type="transmembrane region" description="Helical" evidence="2">
    <location>
        <begin position="424"/>
        <end position="446"/>
    </location>
</feature>
<feature type="topological domain" description="Cytoplasmic" evidence="1">
    <location>
        <begin position="447"/>
        <end position="457"/>
    </location>
</feature>
<feature type="transmembrane region" description="Helical" evidence="2">
    <location>
        <begin position="458"/>
        <end position="479"/>
    </location>
</feature>
<feature type="topological domain" description="Extracellular" evidence="1">
    <location>
        <begin position="480"/>
        <end position="534"/>
    </location>
</feature>
<feature type="transmembrane region" description="Helical" evidence="2">
    <location>
        <begin position="535"/>
        <end position="558"/>
    </location>
</feature>
<feature type="topological domain" description="Cytoplasmic" evidence="1">
    <location>
        <begin position="559"/>
        <end position="569"/>
    </location>
</feature>
<feature type="transmembrane region" description="Helical" evidence="2">
    <location>
        <begin position="570"/>
        <end position="592"/>
    </location>
</feature>
<feature type="topological domain" description="Extracellular" evidence="1">
    <location>
        <begin position="593"/>
        <end position="649"/>
    </location>
</feature>
<feature type="glycosylation site" description="N-linked (GlcNAc...) asparagine" evidence="2">
    <location>
        <position position="605"/>
    </location>
</feature>
<feature type="glycosylation site" description="N-linked (GlcNAc...) asparagine" evidence="2">
    <location>
        <position position="643"/>
    </location>
</feature>
<feature type="splice variant" id="VSP_037221" description="In isoform 2." evidence="15">
    <original>GLALAAFLGLVLWLSLDTSQR</original>
    <variation>DPRPWSKEGPNQYLPQITWTV</variation>
    <location>
        <begin position="155"/>
        <end position="175"/>
    </location>
</feature>
<feature type="splice variant" id="VSP_037222" description="In isoform 2." evidence="15">
    <location>
        <begin position="176"/>
        <end position="649"/>
    </location>
</feature>
<feature type="sequence variant" id="VAR_009499" description="In allele A." evidence="13 14">
    <original>E</original>
    <variation>G</variation>
    <location>
        <position position="34"/>
    </location>
</feature>
<feature type="sequence variant" id="VAR_009500" description="In allele A." evidence="7 13">
    <original>L</original>
    <variation>LV</variation>
    <location>
        <position position="140"/>
    </location>
</feature>
<feature type="sequence variant" id="VAR_009501" description="In allele A; dbSNP:rs2290272." evidence="5 13">
    <original>V</original>
    <variation>I</variation>
    <location>
        <position position="189"/>
    </location>
</feature>
<feature type="sequence variant" id="VAR_057194" description="In dbSNP:rs45523532.">
    <original>A</original>
    <variation>S</variation>
    <location>
        <position position="190"/>
    </location>
</feature>
<feature type="sequence variant" id="VAR_057195" description="In dbSNP:rs8187758.">
    <original>Q</original>
    <variation>K</variation>
    <location>
        <position position="237"/>
    </location>
</feature>
<feature type="sequence variant" id="VAR_009502" description="In allele B; dbSNP:rs1174011667." evidence="13">
    <original>N</original>
    <variation>S</variation>
    <location>
        <position position="409"/>
    </location>
</feature>
<feature type="sequence variant" id="VAR_057196" description="In allele A; affects urinary excretion of uridine and cytidine; changed N-glycosylation; increased protein degradation; dbSNP:rs2242047." evidence="7 10">
    <original>R</original>
    <variation>C</variation>
    <location>
        <position position="510"/>
    </location>
</feature>
<feature type="sequence variant" id="VAR_009503" description="In alleles B and C; dbSNP:rs2242046." evidence="5 13">
    <original>D</original>
    <variation>N</variation>
    <location>
        <position position="521"/>
    </location>
</feature>
<feature type="sequence variant" id="VAR_061802" description="In URCTU; no effect on localization to the cell membrane; loss of pyrimidine- and adenosine-specific:sodium symporter activity; affects urinary excretion of uridine and cytidine; dbSNP:rs45584739." evidence="9 11">
    <original>S</original>
    <variation>P</variation>
    <location>
        <position position="546"/>
    </location>
</feature>
<feature type="sequence variant" id="VAR_082636" description="In URCTU; changed N-glycosylation; increased protein degradation; affects urinary excretion of uridine and cytidine." evidence="10">
    <original>R</original>
    <variation>Q</variation>
    <location>
        <position position="561"/>
    </location>
</feature>
<feature type="mutagenesis site" description="Changed pyrimidine- and adenosine-specific:sodium symporter activity. Decreased specificity for pyrimidine nucleosides enabling also the transport of inosine. Loss of specificity for pyrimidine nucleosides; when associated with M-319 and T-352." evidence="3">
    <original>S</original>
    <variation>G</variation>
    <location>
        <position position="318"/>
    </location>
</feature>
<feature type="mutagenesis site" description="Changed pyrimidine- and adenosine-specific:sodium symporter activity. Loss of specificity for pyrimidine nucleosides; when associated with G-318 and T-352." evidence="3">
    <original>Q</original>
    <variation>M</variation>
    <location>
        <position position="319"/>
    </location>
</feature>
<feature type="mutagenesis site" description="Changed pyrimidine- and adenosine-specific:sodium symporter activity. Loss of specificity for pyrimidine nucleosides; when associated with G-318 and M-319." evidence="3">
    <original>S</original>
    <variation>T</variation>
    <location>
        <position position="352"/>
    </location>
</feature>
<feature type="mutagenesis site" description="No effect on localization to the apical plasma membrane. Loss of pyrimidine- and adenosine-specific:sodium symporter activity. Probably due to sodium uncoupling in the nucleoside translocation cycle." evidence="9">
    <original>S</original>
    <variation>A</variation>
    <variation>C</variation>
    <variation>R</variation>
    <variation>T</variation>
    <location>
        <position position="546"/>
    </location>
</feature>
<feature type="mutagenesis site" description="Loss of pyrimidine- and adenosine-specific:sodium symporter activity." evidence="9">
    <location>
        <position position="546"/>
    </location>
</feature>
<sequence>MENDPSRRRESISLTPVAKGLENMGADFLESLEEGQLPRSDLSPAEIRSSWSEAAPKPFSRWRNLQPALRARSFCREHMQLFRWIGTGLLCTGLSAFLLVACLLDFQRALALFVLTCVVLTFLGHRLLKRLLGPKLRRFLKPQGHPRLLLWFKRGLALAAFLGLVLWLSLDTSQRPEQLVSFAGICVFVALLFACSKHHCAVSWRAVSWGLGLQFVLGLLVIRTEPGFIAFEWLGEQIRIFLSYTKAGSSFVFGEALVKDVFAFQVLPIIVFFSCVISVLYHVGLMQWVILKIAWLMQVTMGTTATETLSVAGNIFVSQTEAPLLIRPYLADMTLSEVHVVMTGGYATIAGSLLGAYISFGIDATSLIAASVMAAPCALALSKLVYPEVEESKFRREEGVKLTYGDAQNLIEAASTGAAISVKVVANIAANLIAFLAVLDFINAALSWLGDMVDIQGLSFQLICSYILRPVAFLMGVAWEDCPVVAELLGIKLFLNEFVAYQDLSKYKQRRLAGAEEWVGDRKQWISVRAEVLTTFALCGFANFSSIGIMLGGLTSMVPQRKSDFSQIVLRALFTGACVSLVNACMAGILYMPRGAEVDCMSLLNTTLSSSSFEIYQCCREAFQSVNPEFSPEALDNCCRFYNHTICAQ</sequence>